<organism>
    <name type="scientific">Serratia proteamaculans (strain 568)</name>
    <dbReference type="NCBI Taxonomy" id="399741"/>
    <lineage>
        <taxon>Bacteria</taxon>
        <taxon>Pseudomonadati</taxon>
        <taxon>Pseudomonadota</taxon>
        <taxon>Gammaproteobacteria</taxon>
        <taxon>Enterobacterales</taxon>
        <taxon>Yersiniaceae</taxon>
        <taxon>Serratia</taxon>
    </lineage>
</organism>
<comment type="function">
    <text evidence="1">Catalyzes the conversion of acetate into acetyl-CoA (AcCoA), an essential intermediate at the junction of anabolic and catabolic pathways. Acs undergoes a two-step reaction. In the first half reaction, Acs combines acetate with ATP to form acetyl-adenylate (AcAMP) intermediate. In the second half reaction, it can then transfer the acetyl group from AcAMP to the sulfhydryl group of CoA, forming the product AcCoA.</text>
</comment>
<comment type="function">
    <text evidence="1">Enables the cell to use acetate during aerobic growth to generate energy via the TCA cycle, and biosynthetic compounds via the glyoxylate shunt. Acetylates CheY, the response regulator involved in flagellar movement and chemotaxis.</text>
</comment>
<comment type="catalytic activity">
    <reaction evidence="1">
        <text>acetate + ATP + CoA = acetyl-CoA + AMP + diphosphate</text>
        <dbReference type="Rhea" id="RHEA:23176"/>
        <dbReference type="ChEBI" id="CHEBI:30089"/>
        <dbReference type="ChEBI" id="CHEBI:30616"/>
        <dbReference type="ChEBI" id="CHEBI:33019"/>
        <dbReference type="ChEBI" id="CHEBI:57287"/>
        <dbReference type="ChEBI" id="CHEBI:57288"/>
        <dbReference type="ChEBI" id="CHEBI:456215"/>
        <dbReference type="EC" id="6.2.1.1"/>
    </reaction>
</comment>
<comment type="cofactor">
    <cofactor evidence="1">
        <name>Mg(2+)</name>
        <dbReference type="ChEBI" id="CHEBI:18420"/>
    </cofactor>
</comment>
<comment type="PTM">
    <text evidence="1">Acetylated. Deacetylation by the SIR2-homolog deacetylase activates the enzyme.</text>
</comment>
<comment type="similarity">
    <text evidence="1">Belongs to the ATP-dependent AMP-binding enzyme family.</text>
</comment>
<evidence type="ECO:0000255" key="1">
    <source>
        <dbReference type="HAMAP-Rule" id="MF_01123"/>
    </source>
</evidence>
<feature type="chain" id="PRO_1000065314" description="Acetyl-coenzyme A synthetase">
    <location>
        <begin position="1"/>
        <end position="652"/>
    </location>
</feature>
<feature type="binding site" evidence="1">
    <location>
        <begin position="191"/>
        <end position="194"/>
    </location>
    <ligand>
        <name>CoA</name>
        <dbReference type="ChEBI" id="CHEBI:57287"/>
    </ligand>
</feature>
<feature type="binding site" evidence="1">
    <location>
        <position position="311"/>
    </location>
    <ligand>
        <name>CoA</name>
        <dbReference type="ChEBI" id="CHEBI:57287"/>
    </ligand>
</feature>
<feature type="binding site" evidence="1">
    <location>
        <position position="335"/>
    </location>
    <ligand>
        <name>CoA</name>
        <dbReference type="ChEBI" id="CHEBI:57287"/>
    </ligand>
</feature>
<feature type="binding site" evidence="1">
    <location>
        <begin position="387"/>
        <end position="389"/>
    </location>
    <ligand>
        <name>ATP</name>
        <dbReference type="ChEBI" id="CHEBI:30616"/>
    </ligand>
</feature>
<feature type="binding site" evidence="1">
    <location>
        <begin position="411"/>
        <end position="416"/>
    </location>
    <ligand>
        <name>ATP</name>
        <dbReference type="ChEBI" id="CHEBI:30616"/>
    </ligand>
</feature>
<feature type="binding site" evidence="1">
    <location>
        <position position="500"/>
    </location>
    <ligand>
        <name>ATP</name>
        <dbReference type="ChEBI" id="CHEBI:30616"/>
    </ligand>
</feature>
<feature type="binding site" evidence="1">
    <location>
        <position position="515"/>
    </location>
    <ligand>
        <name>ATP</name>
        <dbReference type="ChEBI" id="CHEBI:30616"/>
    </ligand>
</feature>
<feature type="binding site" evidence="1">
    <location>
        <position position="523"/>
    </location>
    <ligand>
        <name>CoA</name>
        <dbReference type="ChEBI" id="CHEBI:57287"/>
    </ligand>
</feature>
<feature type="binding site" evidence="1">
    <location>
        <position position="526"/>
    </location>
    <ligand>
        <name>ATP</name>
        <dbReference type="ChEBI" id="CHEBI:30616"/>
    </ligand>
</feature>
<feature type="binding site" evidence="1">
    <location>
        <position position="537"/>
    </location>
    <ligand>
        <name>Mg(2+)</name>
        <dbReference type="ChEBI" id="CHEBI:18420"/>
    </ligand>
</feature>
<feature type="binding site" evidence="1">
    <location>
        <position position="539"/>
    </location>
    <ligand>
        <name>Mg(2+)</name>
        <dbReference type="ChEBI" id="CHEBI:18420"/>
    </ligand>
</feature>
<feature type="binding site" evidence="1">
    <location>
        <position position="542"/>
    </location>
    <ligand>
        <name>Mg(2+)</name>
        <dbReference type="ChEBI" id="CHEBI:18420"/>
    </ligand>
</feature>
<feature type="binding site" evidence="1">
    <location>
        <position position="584"/>
    </location>
    <ligand>
        <name>CoA</name>
        <dbReference type="ChEBI" id="CHEBI:57287"/>
    </ligand>
</feature>
<feature type="modified residue" description="N6-acetyllysine" evidence="1">
    <location>
        <position position="609"/>
    </location>
</feature>
<gene>
    <name evidence="1" type="primary">acs</name>
    <name type="ordered locus">Spro_0297</name>
</gene>
<keyword id="KW-0007">Acetylation</keyword>
<keyword id="KW-0067">ATP-binding</keyword>
<keyword id="KW-0436">Ligase</keyword>
<keyword id="KW-0460">Magnesium</keyword>
<keyword id="KW-0479">Metal-binding</keyword>
<keyword id="KW-0547">Nucleotide-binding</keyword>
<name>ACSA_SERP5</name>
<dbReference type="EC" id="6.2.1.1" evidence="1"/>
<dbReference type="EMBL" id="CP000826">
    <property type="protein sequence ID" value="ABV39407.1"/>
    <property type="molecule type" value="Genomic_DNA"/>
</dbReference>
<dbReference type="SMR" id="A8G8G7"/>
<dbReference type="STRING" id="399741.Spro_0297"/>
<dbReference type="KEGG" id="spe:Spro_0297"/>
<dbReference type="eggNOG" id="COG0365">
    <property type="taxonomic scope" value="Bacteria"/>
</dbReference>
<dbReference type="HOGENOM" id="CLU_000022_3_6_6"/>
<dbReference type="OrthoDB" id="9803968at2"/>
<dbReference type="GO" id="GO:0005829">
    <property type="term" value="C:cytosol"/>
    <property type="evidence" value="ECO:0007669"/>
    <property type="project" value="TreeGrafter"/>
</dbReference>
<dbReference type="GO" id="GO:0003987">
    <property type="term" value="F:acetate-CoA ligase activity"/>
    <property type="evidence" value="ECO:0007669"/>
    <property type="project" value="UniProtKB-UniRule"/>
</dbReference>
<dbReference type="GO" id="GO:0016208">
    <property type="term" value="F:AMP binding"/>
    <property type="evidence" value="ECO:0007669"/>
    <property type="project" value="InterPro"/>
</dbReference>
<dbReference type="GO" id="GO:0005524">
    <property type="term" value="F:ATP binding"/>
    <property type="evidence" value="ECO:0007669"/>
    <property type="project" value="UniProtKB-KW"/>
</dbReference>
<dbReference type="GO" id="GO:0046872">
    <property type="term" value="F:metal ion binding"/>
    <property type="evidence" value="ECO:0007669"/>
    <property type="project" value="UniProtKB-KW"/>
</dbReference>
<dbReference type="GO" id="GO:0019427">
    <property type="term" value="P:acetyl-CoA biosynthetic process from acetate"/>
    <property type="evidence" value="ECO:0007669"/>
    <property type="project" value="UniProtKB-UniRule"/>
</dbReference>
<dbReference type="GO" id="GO:0006935">
    <property type="term" value="P:chemotaxis"/>
    <property type="evidence" value="ECO:0007669"/>
    <property type="project" value="UniProtKB-UniRule"/>
</dbReference>
<dbReference type="CDD" id="cd05966">
    <property type="entry name" value="ACS"/>
    <property type="match status" value="1"/>
</dbReference>
<dbReference type="FunFam" id="3.30.300.30:FF:000004">
    <property type="entry name" value="Acetyl-coenzyme A synthetase"/>
    <property type="match status" value="1"/>
</dbReference>
<dbReference type="FunFam" id="3.40.50.12780:FF:000001">
    <property type="entry name" value="Acetyl-coenzyme A synthetase"/>
    <property type="match status" value="1"/>
</dbReference>
<dbReference type="Gene3D" id="3.30.300.30">
    <property type="match status" value="1"/>
</dbReference>
<dbReference type="Gene3D" id="3.40.50.12780">
    <property type="entry name" value="N-terminal domain of ligase-like"/>
    <property type="match status" value="1"/>
</dbReference>
<dbReference type="HAMAP" id="MF_01123">
    <property type="entry name" value="Ac_CoA_synth"/>
    <property type="match status" value="1"/>
</dbReference>
<dbReference type="InterPro" id="IPR011904">
    <property type="entry name" value="Ac_CoA_lig"/>
</dbReference>
<dbReference type="InterPro" id="IPR032387">
    <property type="entry name" value="ACAS_N"/>
</dbReference>
<dbReference type="InterPro" id="IPR025110">
    <property type="entry name" value="AMP-bd_C"/>
</dbReference>
<dbReference type="InterPro" id="IPR045851">
    <property type="entry name" value="AMP-bd_C_sf"/>
</dbReference>
<dbReference type="InterPro" id="IPR020845">
    <property type="entry name" value="AMP-binding_CS"/>
</dbReference>
<dbReference type="InterPro" id="IPR000873">
    <property type="entry name" value="AMP-dep_synth/lig_dom"/>
</dbReference>
<dbReference type="InterPro" id="IPR042099">
    <property type="entry name" value="ANL_N_sf"/>
</dbReference>
<dbReference type="NCBIfam" id="TIGR02188">
    <property type="entry name" value="Ac_CoA_lig_AcsA"/>
    <property type="match status" value="1"/>
</dbReference>
<dbReference type="NCBIfam" id="NF001208">
    <property type="entry name" value="PRK00174.1"/>
    <property type="match status" value="1"/>
</dbReference>
<dbReference type="PANTHER" id="PTHR24095">
    <property type="entry name" value="ACETYL-COENZYME A SYNTHETASE"/>
    <property type="match status" value="1"/>
</dbReference>
<dbReference type="PANTHER" id="PTHR24095:SF243">
    <property type="entry name" value="ACETYL-COENZYME A SYNTHETASE"/>
    <property type="match status" value="1"/>
</dbReference>
<dbReference type="Pfam" id="PF16177">
    <property type="entry name" value="ACAS_N"/>
    <property type="match status" value="1"/>
</dbReference>
<dbReference type="Pfam" id="PF00501">
    <property type="entry name" value="AMP-binding"/>
    <property type="match status" value="1"/>
</dbReference>
<dbReference type="Pfam" id="PF13193">
    <property type="entry name" value="AMP-binding_C"/>
    <property type="match status" value="1"/>
</dbReference>
<dbReference type="SUPFAM" id="SSF56801">
    <property type="entry name" value="Acetyl-CoA synthetase-like"/>
    <property type="match status" value="1"/>
</dbReference>
<dbReference type="PROSITE" id="PS00455">
    <property type="entry name" value="AMP_BINDING"/>
    <property type="match status" value="1"/>
</dbReference>
<proteinExistence type="inferred from homology"/>
<accession>A8G8G7</accession>
<protein>
    <recommendedName>
        <fullName evidence="1">Acetyl-coenzyme A synthetase</fullName>
        <shortName evidence="1">AcCoA synthetase</shortName>
        <shortName evidence="1">Acs</shortName>
        <ecNumber evidence="1">6.2.1.1</ecNumber>
    </recommendedName>
    <alternativeName>
        <fullName evidence="1">Acetate--CoA ligase</fullName>
    </alternativeName>
    <alternativeName>
        <fullName evidence="1">Acyl-activating enzyme</fullName>
    </alternativeName>
</protein>
<sequence length="652" mass="71934">MSQVHKHAIPSAIAEHALINPTQYQQYYQQSVQDPETFWGEQGKILDWIKPYSRVKNTSFDPGHISIRWFEDGTLNLAANCLDRHLAERGDQTAIIWEGDDPTQSKQVTYKQLHHDVCQFANVLKKLGVKKGDVVAIYMPMVPEAAVAMLACARIGAVHSVIFGGFSPEAVAGRIIDSNSKLVITADEGLRAGRAVPLKKNVDDALKNPGVKSITNVVVFQRTGKPGYWQEGRDLWWHELTAGVSADCPPEEMNAEDPLFILYTSGSTGKPKGVLHTTGGYLVYAAMTFKYVFDYHDGDVYWCTADVGWVTGHSYLLYGPLACGAITLMFEGVPNYPGVNRLSQVIDKHQVNILYTAPTAIRALMAEGDKAIEGTKRDSLRIMGSVGEPINPEAWEWYYNKIGNAKCPIVDTWWQTETGGFMITPLPGATELKAGSATRPFFGVQPALVDNIGTVQEGACEGNLVITDSWPGQARTLFGDHDRFEQTYFSTFKGMYFSGDGARRDEDGYYWITGRVDDVLNVSGHRLGTAEIESALVSHPKIAEAAVVGIPHNIKGQAIYAYITLNHGEEPTPELYTEVRNWVRKEIGPIATPDVLHWTDSLPKTRSGKIMRRILRKIAAGDTSNLGDTSTLADPAVVDKLLEEKQSMKVPS</sequence>
<reference key="1">
    <citation type="submission" date="2007-09" db="EMBL/GenBank/DDBJ databases">
        <title>Complete sequence of chromosome of Serratia proteamaculans 568.</title>
        <authorList>
            <consortium name="US DOE Joint Genome Institute"/>
            <person name="Copeland A."/>
            <person name="Lucas S."/>
            <person name="Lapidus A."/>
            <person name="Barry K."/>
            <person name="Glavina del Rio T."/>
            <person name="Dalin E."/>
            <person name="Tice H."/>
            <person name="Pitluck S."/>
            <person name="Chain P."/>
            <person name="Malfatti S."/>
            <person name="Shin M."/>
            <person name="Vergez L."/>
            <person name="Schmutz J."/>
            <person name="Larimer F."/>
            <person name="Land M."/>
            <person name="Hauser L."/>
            <person name="Kyrpides N."/>
            <person name="Kim E."/>
            <person name="Taghavi S."/>
            <person name="Newman L."/>
            <person name="Vangronsveld J."/>
            <person name="van der Lelie D."/>
            <person name="Richardson P."/>
        </authorList>
    </citation>
    <scope>NUCLEOTIDE SEQUENCE [LARGE SCALE GENOMIC DNA]</scope>
    <source>
        <strain>568</strain>
    </source>
</reference>